<protein>
    <recommendedName>
        <fullName evidence="1">High frequency lysogenization protein HflD homolog</fullName>
    </recommendedName>
</protein>
<gene>
    <name evidence="1" type="primary">hflD</name>
    <name type="ordered locus">PMI0887</name>
</gene>
<name>HFLD_PROMH</name>
<dbReference type="EMBL" id="AM942759">
    <property type="protein sequence ID" value="CAR41991.1"/>
    <property type="molecule type" value="Genomic_DNA"/>
</dbReference>
<dbReference type="RefSeq" id="WP_012367769.1">
    <property type="nucleotide sequence ID" value="NC_010554.1"/>
</dbReference>
<dbReference type="SMR" id="B4EVG1"/>
<dbReference type="EnsemblBacteria" id="CAR41991">
    <property type="protein sequence ID" value="CAR41991"/>
    <property type="gene ID" value="PMI0887"/>
</dbReference>
<dbReference type="GeneID" id="6802899"/>
<dbReference type="KEGG" id="pmr:PMI0887"/>
<dbReference type="PATRIC" id="fig|529507.6.peg.864"/>
<dbReference type="eggNOG" id="COG2915">
    <property type="taxonomic scope" value="Bacteria"/>
</dbReference>
<dbReference type="HOGENOM" id="CLU_098920_0_0_6"/>
<dbReference type="Proteomes" id="UP000008319">
    <property type="component" value="Chromosome"/>
</dbReference>
<dbReference type="GO" id="GO:0005737">
    <property type="term" value="C:cytoplasm"/>
    <property type="evidence" value="ECO:0007669"/>
    <property type="project" value="UniProtKB-SubCell"/>
</dbReference>
<dbReference type="GO" id="GO:0005886">
    <property type="term" value="C:plasma membrane"/>
    <property type="evidence" value="ECO:0007669"/>
    <property type="project" value="UniProtKB-SubCell"/>
</dbReference>
<dbReference type="Gene3D" id="1.10.3890.10">
    <property type="entry name" value="HflD-like"/>
    <property type="match status" value="1"/>
</dbReference>
<dbReference type="HAMAP" id="MF_00695">
    <property type="entry name" value="HflD_protein"/>
    <property type="match status" value="1"/>
</dbReference>
<dbReference type="InterPro" id="IPR007451">
    <property type="entry name" value="HflD"/>
</dbReference>
<dbReference type="InterPro" id="IPR035932">
    <property type="entry name" value="HflD-like_sf"/>
</dbReference>
<dbReference type="NCBIfam" id="NF001246">
    <property type="entry name" value="PRK00218.1-2"/>
    <property type="match status" value="1"/>
</dbReference>
<dbReference type="NCBIfam" id="NF001248">
    <property type="entry name" value="PRK00218.1-4"/>
    <property type="match status" value="1"/>
</dbReference>
<dbReference type="PANTHER" id="PTHR38100">
    <property type="entry name" value="HIGH FREQUENCY LYSOGENIZATION PROTEIN HFLD"/>
    <property type="match status" value="1"/>
</dbReference>
<dbReference type="PANTHER" id="PTHR38100:SF1">
    <property type="entry name" value="HIGH FREQUENCY LYSOGENIZATION PROTEIN HFLD"/>
    <property type="match status" value="1"/>
</dbReference>
<dbReference type="Pfam" id="PF04356">
    <property type="entry name" value="DUF489"/>
    <property type="match status" value="1"/>
</dbReference>
<dbReference type="SUPFAM" id="SSF101322">
    <property type="entry name" value="YcfC-like"/>
    <property type="match status" value="1"/>
</dbReference>
<feature type="chain" id="PRO_1000132294" description="High frequency lysogenization protein HflD homolog">
    <location>
        <begin position="1"/>
        <end position="209"/>
    </location>
</feature>
<keyword id="KW-0997">Cell inner membrane</keyword>
<keyword id="KW-1003">Cell membrane</keyword>
<keyword id="KW-0963">Cytoplasm</keyword>
<keyword id="KW-0472">Membrane</keyword>
<keyword id="KW-1185">Reference proteome</keyword>
<organism>
    <name type="scientific">Proteus mirabilis (strain HI4320)</name>
    <dbReference type="NCBI Taxonomy" id="529507"/>
    <lineage>
        <taxon>Bacteria</taxon>
        <taxon>Pseudomonadati</taxon>
        <taxon>Pseudomonadota</taxon>
        <taxon>Gammaproteobacteria</taxon>
        <taxon>Enterobacterales</taxon>
        <taxon>Morganellaceae</taxon>
        <taxon>Proteus</taxon>
    </lineage>
</organism>
<evidence type="ECO:0000255" key="1">
    <source>
        <dbReference type="HAMAP-Rule" id="MF_00695"/>
    </source>
</evidence>
<proteinExistence type="inferred from homology"/>
<comment type="subcellular location">
    <subcellularLocation>
        <location>Cytoplasm</location>
    </subcellularLocation>
    <subcellularLocation>
        <location evidence="1">Cell inner membrane</location>
        <topology evidence="1">Peripheral membrane protein</topology>
        <orientation evidence="1">Cytoplasmic side</orientation>
    </subcellularLocation>
</comment>
<comment type="similarity">
    <text evidence="1">Belongs to the HflD family.</text>
</comment>
<reference key="1">
    <citation type="journal article" date="2008" name="J. Bacteriol.">
        <title>Complete genome sequence of uropathogenic Proteus mirabilis, a master of both adherence and motility.</title>
        <authorList>
            <person name="Pearson M.M."/>
            <person name="Sebaihia M."/>
            <person name="Churcher C."/>
            <person name="Quail M.A."/>
            <person name="Seshasayee A.S."/>
            <person name="Luscombe N.M."/>
            <person name="Abdellah Z."/>
            <person name="Arrosmith C."/>
            <person name="Atkin B."/>
            <person name="Chillingworth T."/>
            <person name="Hauser H."/>
            <person name="Jagels K."/>
            <person name="Moule S."/>
            <person name="Mungall K."/>
            <person name="Norbertczak H."/>
            <person name="Rabbinowitsch E."/>
            <person name="Walker D."/>
            <person name="Whithead S."/>
            <person name="Thomson N.R."/>
            <person name="Rather P.N."/>
            <person name="Parkhill J."/>
            <person name="Mobley H.L.T."/>
        </authorList>
    </citation>
    <scope>NUCLEOTIDE SEQUENCE [LARGE SCALE GENOMIC DNA]</scope>
    <source>
        <strain>HI4320</strain>
    </source>
</reference>
<accession>B4EVG1</accession>
<sequence>MAKDFRDITLALAGICQASRLVQQIAYQGNADEKDVEVMVNSIFNINPTSTLDVYSNQISHLKLGFQTIKAIHQAVRREKLTFELMTYQQGLINLERIINKNNDYSSHLSQKISQLERQKNYFEPLSDGLFNALAGVYSDAVSPVGPKIQVNGSIELLKNPIIQAKVRGLLLTGLRSAVLWRQVGGRRFDFLLHQKTILRQTDDFLAQC</sequence>